<organism>
    <name type="scientific">Burkholderia pseudomallei (strain 668)</name>
    <dbReference type="NCBI Taxonomy" id="320373"/>
    <lineage>
        <taxon>Bacteria</taxon>
        <taxon>Pseudomonadati</taxon>
        <taxon>Pseudomonadota</taxon>
        <taxon>Betaproteobacteria</taxon>
        <taxon>Burkholderiales</taxon>
        <taxon>Burkholderiaceae</taxon>
        <taxon>Burkholderia</taxon>
        <taxon>pseudomallei group</taxon>
    </lineage>
</organism>
<feature type="chain" id="PRO_1000022598" description="ATP-dependent Clp protease adapter protein ClpS">
    <location>
        <begin position="1"/>
        <end position="104"/>
    </location>
</feature>
<sequence>MAIIPDKQDSSVLERKEQKLKPPSMYKVVLLNDDFTPMEFVVMVVQEYFKKDRETATQIMLKVHREGRGVCGVYTRDIASTKVEQVVTHARQAGHPLQCVMEEA</sequence>
<reference key="1">
    <citation type="journal article" date="2010" name="Genome Biol. Evol.">
        <title>Continuing evolution of Burkholderia mallei through genome reduction and large-scale rearrangements.</title>
        <authorList>
            <person name="Losada L."/>
            <person name="Ronning C.M."/>
            <person name="DeShazer D."/>
            <person name="Woods D."/>
            <person name="Fedorova N."/>
            <person name="Kim H.S."/>
            <person name="Shabalina S.A."/>
            <person name="Pearson T.R."/>
            <person name="Brinkac L."/>
            <person name="Tan P."/>
            <person name="Nandi T."/>
            <person name="Crabtree J."/>
            <person name="Badger J."/>
            <person name="Beckstrom-Sternberg S."/>
            <person name="Saqib M."/>
            <person name="Schutzer S.E."/>
            <person name="Keim P."/>
            <person name="Nierman W.C."/>
        </authorList>
    </citation>
    <scope>NUCLEOTIDE SEQUENCE [LARGE SCALE GENOMIC DNA]</scope>
    <source>
        <strain>668</strain>
    </source>
</reference>
<proteinExistence type="inferred from homology"/>
<accession>A3N6N9</accession>
<evidence type="ECO:0000255" key="1">
    <source>
        <dbReference type="HAMAP-Rule" id="MF_00302"/>
    </source>
</evidence>
<gene>
    <name evidence="1" type="primary">clpS</name>
    <name type="ordered locus">BURPS668_0959</name>
</gene>
<dbReference type="EMBL" id="CP000570">
    <property type="protein sequence ID" value="ABN83544.1"/>
    <property type="molecule type" value="Genomic_DNA"/>
</dbReference>
<dbReference type="RefSeq" id="WP_004194131.1">
    <property type="nucleotide sequence ID" value="NC_009074.1"/>
</dbReference>
<dbReference type="SMR" id="A3N6N9"/>
<dbReference type="GeneID" id="93059411"/>
<dbReference type="KEGG" id="bpd:BURPS668_0959"/>
<dbReference type="HOGENOM" id="CLU_134358_0_0_4"/>
<dbReference type="GO" id="GO:0030163">
    <property type="term" value="P:protein catabolic process"/>
    <property type="evidence" value="ECO:0007669"/>
    <property type="project" value="InterPro"/>
</dbReference>
<dbReference type="GO" id="GO:0006508">
    <property type="term" value="P:proteolysis"/>
    <property type="evidence" value="ECO:0007669"/>
    <property type="project" value="UniProtKB-UniRule"/>
</dbReference>
<dbReference type="FunFam" id="3.30.1390.10:FF:000002">
    <property type="entry name" value="ATP-dependent Clp protease adapter protein ClpS"/>
    <property type="match status" value="1"/>
</dbReference>
<dbReference type="Gene3D" id="3.30.1390.10">
    <property type="match status" value="1"/>
</dbReference>
<dbReference type="HAMAP" id="MF_00302">
    <property type="entry name" value="ClpS"/>
    <property type="match status" value="1"/>
</dbReference>
<dbReference type="InterPro" id="IPR022935">
    <property type="entry name" value="ClpS"/>
</dbReference>
<dbReference type="InterPro" id="IPR003769">
    <property type="entry name" value="ClpS_core"/>
</dbReference>
<dbReference type="InterPro" id="IPR014719">
    <property type="entry name" value="Ribosomal_bL12_C/ClpS-like"/>
</dbReference>
<dbReference type="NCBIfam" id="NF000672">
    <property type="entry name" value="PRK00033.1-5"/>
    <property type="match status" value="1"/>
</dbReference>
<dbReference type="PANTHER" id="PTHR33473:SF19">
    <property type="entry name" value="ATP-DEPENDENT CLP PROTEASE ADAPTER PROTEIN CLPS"/>
    <property type="match status" value="1"/>
</dbReference>
<dbReference type="PANTHER" id="PTHR33473">
    <property type="entry name" value="ATP-DEPENDENT CLP PROTEASE ADAPTER PROTEIN CLPS1, CHLOROPLASTIC"/>
    <property type="match status" value="1"/>
</dbReference>
<dbReference type="Pfam" id="PF02617">
    <property type="entry name" value="ClpS"/>
    <property type="match status" value="1"/>
</dbReference>
<dbReference type="SUPFAM" id="SSF54736">
    <property type="entry name" value="ClpS-like"/>
    <property type="match status" value="1"/>
</dbReference>
<comment type="function">
    <text evidence="1">Involved in the modulation of the specificity of the ClpAP-mediated ATP-dependent protein degradation.</text>
</comment>
<comment type="subunit">
    <text evidence="1">Binds to the N-terminal domain of the chaperone ClpA.</text>
</comment>
<comment type="similarity">
    <text evidence="1">Belongs to the ClpS family.</text>
</comment>
<protein>
    <recommendedName>
        <fullName evidence="1">ATP-dependent Clp protease adapter protein ClpS</fullName>
    </recommendedName>
</protein>
<name>CLPS_BURP6</name>